<feature type="chain" id="PRO_1000100660" description="Cytidylate kinase">
    <location>
        <begin position="1"/>
        <end position="227"/>
    </location>
</feature>
<feature type="binding site" evidence="1">
    <location>
        <begin position="12"/>
        <end position="20"/>
    </location>
    <ligand>
        <name>ATP</name>
        <dbReference type="ChEBI" id="CHEBI:30616"/>
    </ligand>
</feature>
<proteinExistence type="inferred from homology"/>
<keyword id="KW-0067">ATP-binding</keyword>
<keyword id="KW-0963">Cytoplasm</keyword>
<keyword id="KW-0418">Kinase</keyword>
<keyword id="KW-0547">Nucleotide-binding</keyword>
<keyword id="KW-0808">Transferase</keyword>
<evidence type="ECO:0000255" key="1">
    <source>
        <dbReference type="HAMAP-Rule" id="MF_00238"/>
    </source>
</evidence>
<comment type="catalytic activity">
    <reaction evidence="1">
        <text>CMP + ATP = CDP + ADP</text>
        <dbReference type="Rhea" id="RHEA:11600"/>
        <dbReference type="ChEBI" id="CHEBI:30616"/>
        <dbReference type="ChEBI" id="CHEBI:58069"/>
        <dbReference type="ChEBI" id="CHEBI:60377"/>
        <dbReference type="ChEBI" id="CHEBI:456216"/>
        <dbReference type="EC" id="2.7.4.25"/>
    </reaction>
</comment>
<comment type="catalytic activity">
    <reaction evidence="1">
        <text>dCMP + ATP = dCDP + ADP</text>
        <dbReference type="Rhea" id="RHEA:25094"/>
        <dbReference type="ChEBI" id="CHEBI:30616"/>
        <dbReference type="ChEBI" id="CHEBI:57566"/>
        <dbReference type="ChEBI" id="CHEBI:58593"/>
        <dbReference type="ChEBI" id="CHEBI:456216"/>
        <dbReference type="EC" id="2.7.4.25"/>
    </reaction>
</comment>
<comment type="subcellular location">
    <subcellularLocation>
        <location evidence="1">Cytoplasm</location>
    </subcellularLocation>
</comment>
<comment type="similarity">
    <text evidence="1">Belongs to the cytidylate kinase family. Type 1 subfamily.</text>
</comment>
<sequence length="227" mass="24746">MTAIAPVITIDGPSGAGKGTLCKAMAEALQWHLLDSGAIYRVLALAALHHHVDVASEDALVPLASHLDVRFVSTNGNLEVILEGEDVSGEIRTQEVANAASQVAAFPRVREALLRRQRAFRELPGLIADGRDMGTVVFPDAPVKIFLDASSEERAHRRMLQLQEKGFSVNFERLLAEIKERDDRDRNRAVAPLVPAADALVLDSTTLSIEQVIEKALQYARQKLALA</sequence>
<reference key="1">
    <citation type="journal article" date="2011" name="Proc. Natl. Acad. Sci. U.S.A.">
        <title>Genomic anatomy of Escherichia coli O157:H7 outbreaks.</title>
        <authorList>
            <person name="Eppinger M."/>
            <person name="Mammel M.K."/>
            <person name="Leclerc J.E."/>
            <person name="Ravel J."/>
            <person name="Cebula T.A."/>
        </authorList>
    </citation>
    <scope>NUCLEOTIDE SEQUENCE [LARGE SCALE GENOMIC DNA]</scope>
    <source>
        <strain>EC4115 / EHEC</strain>
    </source>
</reference>
<organism>
    <name type="scientific">Escherichia coli O157:H7 (strain EC4115 / EHEC)</name>
    <dbReference type="NCBI Taxonomy" id="444450"/>
    <lineage>
        <taxon>Bacteria</taxon>
        <taxon>Pseudomonadati</taxon>
        <taxon>Pseudomonadota</taxon>
        <taxon>Gammaproteobacteria</taxon>
        <taxon>Enterobacterales</taxon>
        <taxon>Enterobacteriaceae</taxon>
        <taxon>Escherichia</taxon>
    </lineage>
</organism>
<gene>
    <name evidence="1" type="primary">cmk</name>
    <name type="ordered locus">ECH74115_1071</name>
</gene>
<accession>B5YT44</accession>
<name>KCY_ECO5E</name>
<dbReference type="EC" id="2.7.4.25" evidence="1"/>
<dbReference type="EMBL" id="CP001164">
    <property type="protein sequence ID" value="ACI36897.1"/>
    <property type="molecule type" value="Genomic_DNA"/>
</dbReference>
<dbReference type="RefSeq" id="WP_000125016.1">
    <property type="nucleotide sequence ID" value="NC_011353.1"/>
</dbReference>
<dbReference type="SMR" id="B5YT44"/>
<dbReference type="GeneID" id="93776507"/>
<dbReference type="KEGG" id="ecf:ECH74115_1071"/>
<dbReference type="HOGENOM" id="CLU_079959_0_2_6"/>
<dbReference type="GO" id="GO:0005829">
    <property type="term" value="C:cytosol"/>
    <property type="evidence" value="ECO:0007669"/>
    <property type="project" value="TreeGrafter"/>
</dbReference>
<dbReference type="GO" id="GO:0005524">
    <property type="term" value="F:ATP binding"/>
    <property type="evidence" value="ECO:0007669"/>
    <property type="project" value="UniProtKB-UniRule"/>
</dbReference>
<dbReference type="GO" id="GO:0036430">
    <property type="term" value="F:CMP kinase activity"/>
    <property type="evidence" value="ECO:0007669"/>
    <property type="project" value="RHEA"/>
</dbReference>
<dbReference type="GO" id="GO:0036431">
    <property type="term" value="F:dCMP kinase activity"/>
    <property type="evidence" value="ECO:0007669"/>
    <property type="project" value="RHEA"/>
</dbReference>
<dbReference type="GO" id="GO:0015949">
    <property type="term" value="P:nucleobase-containing small molecule interconversion"/>
    <property type="evidence" value="ECO:0007669"/>
    <property type="project" value="TreeGrafter"/>
</dbReference>
<dbReference type="GO" id="GO:0006220">
    <property type="term" value="P:pyrimidine nucleotide metabolic process"/>
    <property type="evidence" value="ECO:0007669"/>
    <property type="project" value="UniProtKB-UniRule"/>
</dbReference>
<dbReference type="CDD" id="cd02020">
    <property type="entry name" value="CMPK"/>
    <property type="match status" value="1"/>
</dbReference>
<dbReference type="FunFam" id="3.40.50.300:FF:000262">
    <property type="entry name" value="Cytidylate kinase"/>
    <property type="match status" value="1"/>
</dbReference>
<dbReference type="Gene3D" id="3.40.50.300">
    <property type="entry name" value="P-loop containing nucleotide triphosphate hydrolases"/>
    <property type="match status" value="1"/>
</dbReference>
<dbReference type="HAMAP" id="MF_00238">
    <property type="entry name" value="Cytidyl_kinase_type1"/>
    <property type="match status" value="1"/>
</dbReference>
<dbReference type="InterPro" id="IPR003136">
    <property type="entry name" value="Cytidylate_kin"/>
</dbReference>
<dbReference type="InterPro" id="IPR011994">
    <property type="entry name" value="Cytidylate_kinase_dom"/>
</dbReference>
<dbReference type="InterPro" id="IPR027417">
    <property type="entry name" value="P-loop_NTPase"/>
</dbReference>
<dbReference type="NCBIfam" id="TIGR00017">
    <property type="entry name" value="cmk"/>
    <property type="match status" value="1"/>
</dbReference>
<dbReference type="PANTHER" id="PTHR21299:SF2">
    <property type="entry name" value="CYTIDYLATE KINASE"/>
    <property type="match status" value="1"/>
</dbReference>
<dbReference type="PANTHER" id="PTHR21299">
    <property type="entry name" value="CYTIDYLATE KINASE/PANTOATE-BETA-ALANINE LIGASE"/>
    <property type="match status" value="1"/>
</dbReference>
<dbReference type="Pfam" id="PF02224">
    <property type="entry name" value="Cytidylate_kin"/>
    <property type="match status" value="1"/>
</dbReference>
<dbReference type="SUPFAM" id="SSF52540">
    <property type="entry name" value="P-loop containing nucleoside triphosphate hydrolases"/>
    <property type="match status" value="1"/>
</dbReference>
<protein>
    <recommendedName>
        <fullName evidence="1">Cytidylate kinase</fullName>
        <shortName evidence="1">CK</shortName>
        <ecNumber evidence="1">2.7.4.25</ecNumber>
    </recommendedName>
    <alternativeName>
        <fullName evidence="1">Cytidine monophosphate kinase</fullName>
        <shortName evidence="1">CMP kinase</shortName>
    </alternativeName>
</protein>